<proteinExistence type="inferred from homology"/>
<organism>
    <name type="scientific">Clostridium perfringens (strain SM101 / Type A)</name>
    <dbReference type="NCBI Taxonomy" id="289380"/>
    <lineage>
        <taxon>Bacteria</taxon>
        <taxon>Bacillati</taxon>
        <taxon>Bacillota</taxon>
        <taxon>Clostridia</taxon>
        <taxon>Eubacteriales</taxon>
        <taxon>Clostridiaceae</taxon>
        <taxon>Clostridium</taxon>
    </lineage>
</organism>
<feature type="chain" id="PRO_1000005747" description="Galactokinase">
    <location>
        <begin position="1"/>
        <end position="387"/>
    </location>
</feature>
<feature type="active site" description="Proton acceptor" evidence="1">
    <location>
        <position position="174"/>
    </location>
</feature>
<feature type="binding site" evidence="1">
    <location>
        <begin position="33"/>
        <end position="36"/>
    </location>
    <ligand>
        <name>substrate</name>
    </ligand>
</feature>
<feature type="binding site" evidence="1">
    <location>
        <position position="67"/>
    </location>
    <ligand>
        <name>ATP</name>
        <dbReference type="ChEBI" id="CHEBI:30616"/>
    </ligand>
</feature>
<feature type="binding site" evidence="1">
    <location>
        <begin position="124"/>
        <end position="130"/>
    </location>
    <ligand>
        <name>ATP</name>
        <dbReference type="ChEBI" id="CHEBI:30616"/>
    </ligand>
</feature>
<feature type="binding site" evidence="1">
    <location>
        <position position="130"/>
    </location>
    <ligand>
        <name>Mg(2+)</name>
        <dbReference type="ChEBI" id="CHEBI:18420"/>
    </ligand>
</feature>
<feature type="binding site" evidence="1">
    <location>
        <position position="162"/>
    </location>
    <ligand>
        <name>Mg(2+)</name>
        <dbReference type="ChEBI" id="CHEBI:18420"/>
    </ligand>
</feature>
<feature type="binding site" evidence="1">
    <location>
        <position position="224"/>
    </location>
    <ligand>
        <name>substrate</name>
    </ligand>
</feature>
<feature type="site" description="Transition state stabilizer" evidence="1">
    <location>
        <position position="27"/>
    </location>
</feature>
<dbReference type="EC" id="2.7.1.6" evidence="1"/>
<dbReference type="EMBL" id="CP000312">
    <property type="protein sequence ID" value="ABG87750.1"/>
    <property type="molecule type" value="Genomic_DNA"/>
</dbReference>
<dbReference type="RefSeq" id="WP_011592322.1">
    <property type="nucleotide sequence ID" value="NC_008262.1"/>
</dbReference>
<dbReference type="SMR" id="Q0ST92"/>
<dbReference type="KEGG" id="cpr:CPR_1345"/>
<dbReference type="UniPathway" id="UPA00214"/>
<dbReference type="Proteomes" id="UP000001824">
    <property type="component" value="Chromosome"/>
</dbReference>
<dbReference type="GO" id="GO:0005829">
    <property type="term" value="C:cytosol"/>
    <property type="evidence" value="ECO:0007669"/>
    <property type="project" value="TreeGrafter"/>
</dbReference>
<dbReference type="GO" id="GO:0005524">
    <property type="term" value="F:ATP binding"/>
    <property type="evidence" value="ECO:0007669"/>
    <property type="project" value="UniProtKB-UniRule"/>
</dbReference>
<dbReference type="GO" id="GO:0004335">
    <property type="term" value="F:galactokinase activity"/>
    <property type="evidence" value="ECO:0007669"/>
    <property type="project" value="UniProtKB-UniRule"/>
</dbReference>
<dbReference type="GO" id="GO:0000287">
    <property type="term" value="F:magnesium ion binding"/>
    <property type="evidence" value="ECO:0007669"/>
    <property type="project" value="UniProtKB-UniRule"/>
</dbReference>
<dbReference type="GO" id="GO:0006012">
    <property type="term" value="P:galactose metabolic process"/>
    <property type="evidence" value="ECO:0007669"/>
    <property type="project" value="UniProtKB-UniRule"/>
</dbReference>
<dbReference type="FunFam" id="3.30.230.10:FF:000017">
    <property type="entry name" value="Galactokinase"/>
    <property type="match status" value="1"/>
</dbReference>
<dbReference type="FunFam" id="3.30.70.890:FF:000001">
    <property type="entry name" value="Galactokinase"/>
    <property type="match status" value="1"/>
</dbReference>
<dbReference type="Gene3D" id="3.30.230.10">
    <property type="match status" value="1"/>
</dbReference>
<dbReference type="Gene3D" id="3.30.70.890">
    <property type="entry name" value="GHMP kinase, C-terminal domain"/>
    <property type="match status" value="1"/>
</dbReference>
<dbReference type="HAMAP" id="MF_00246">
    <property type="entry name" value="Galactokinase"/>
    <property type="match status" value="1"/>
</dbReference>
<dbReference type="InterPro" id="IPR000705">
    <property type="entry name" value="Galactokinase"/>
</dbReference>
<dbReference type="InterPro" id="IPR022963">
    <property type="entry name" value="Galactokinase_bac"/>
</dbReference>
<dbReference type="InterPro" id="IPR019741">
    <property type="entry name" value="Galactokinase_CS"/>
</dbReference>
<dbReference type="InterPro" id="IPR019539">
    <property type="entry name" value="GalKase_N"/>
</dbReference>
<dbReference type="InterPro" id="IPR013750">
    <property type="entry name" value="GHMP_kinase_C_dom"/>
</dbReference>
<dbReference type="InterPro" id="IPR036554">
    <property type="entry name" value="GHMP_kinase_C_sf"/>
</dbReference>
<dbReference type="InterPro" id="IPR006204">
    <property type="entry name" value="GHMP_kinase_N_dom"/>
</dbReference>
<dbReference type="InterPro" id="IPR006203">
    <property type="entry name" value="GHMP_knse_ATP-bd_CS"/>
</dbReference>
<dbReference type="InterPro" id="IPR006206">
    <property type="entry name" value="Mevalonate/galactokinase"/>
</dbReference>
<dbReference type="InterPro" id="IPR020568">
    <property type="entry name" value="Ribosomal_Su5_D2-typ_SF"/>
</dbReference>
<dbReference type="InterPro" id="IPR014721">
    <property type="entry name" value="Ribsml_uS5_D2-typ_fold_subgr"/>
</dbReference>
<dbReference type="NCBIfam" id="TIGR00131">
    <property type="entry name" value="gal_kin"/>
    <property type="match status" value="1"/>
</dbReference>
<dbReference type="NCBIfam" id="NF003705">
    <property type="entry name" value="PRK05322.1"/>
    <property type="match status" value="1"/>
</dbReference>
<dbReference type="PANTHER" id="PTHR10457:SF7">
    <property type="entry name" value="GALACTOKINASE-RELATED"/>
    <property type="match status" value="1"/>
</dbReference>
<dbReference type="PANTHER" id="PTHR10457">
    <property type="entry name" value="MEVALONATE KINASE/GALACTOKINASE"/>
    <property type="match status" value="1"/>
</dbReference>
<dbReference type="Pfam" id="PF10509">
    <property type="entry name" value="GalKase_gal_bdg"/>
    <property type="match status" value="1"/>
</dbReference>
<dbReference type="Pfam" id="PF08544">
    <property type="entry name" value="GHMP_kinases_C"/>
    <property type="match status" value="1"/>
</dbReference>
<dbReference type="Pfam" id="PF00288">
    <property type="entry name" value="GHMP_kinases_N"/>
    <property type="match status" value="1"/>
</dbReference>
<dbReference type="PIRSF" id="PIRSF000530">
    <property type="entry name" value="Galactokinase"/>
    <property type="match status" value="1"/>
</dbReference>
<dbReference type="PRINTS" id="PR00473">
    <property type="entry name" value="GALCTOKINASE"/>
</dbReference>
<dbReference type="PRINTS" id="PR00959">
    <property type="entry name" value="MEVGALKINASE"/>
</dbReference>
<dbReference type="SUPFAM" id="SSF55060">
    <property type="entry name" value="GHMP Kinase, C-terminal domain"/>
    <property type="match status" value="1"/>
</dbReference>
<dbReference type="SUPFAM" id="SSF54211">
    <property type="entry name" value="Ribosomal protein S5 domain 2-like"/>
    <property type="match status" value="1"/>
</dbReference>
<dbReference type="PROSITE" id="PS00106">
    <property type="entry name" value="GALACTOKINASE"/>
    <property type="match status" value="1"/>
</dbReference>
<dbReference type="PROSITE" id="PS00627">
    <property type="entry name" value="GHMP_KINASES_ATP"/>
    <property type="match status" value="1"/>
</dbReference>
<evidence type="ECO:0000255" key="1">
    <source>
        <dbReference type="HAMAP-Rule" id="MF_00246"/>
    </source>
</evidence>
<protein>
    <recommendedName>
        <fullName evidence="1">Galactokinase</fullName>
        <ecNumber evidence="1">2.7.1.6</ecNumber>
    </recommendedName>
    <alternativeName>
        <fullName evidence="1">Galactose kinase</fullName>
    </alternativeName>
</protein>
<keyword id="KW-0067">ATP-binding</keyword>
<keyword id="KW-0119">Carbohydrate metabolism</keyword>
<keyword id="KW-0963">Cytoplasm</keyword>
<keyword id="KW-0299">Galactose metabolism</keyword>
<keyword id="KW-0418">Kinase</keyword>
<keyword id="KW-0460">Magnesium</keyword>
<keyword id="KW-0479">Metal-binding</keyword>
<keyword id="KW-0547">Nucleotide-binding</keyword>
<keyword id="KW-0808">Transferase</keyword>
<gene>
    <name evidence="1" type="primary">galK</name>
    <name type="ordered locus">CPR_1345</name>
</gene>
<sequence>MELNTLKSTFINNFGKEPNSLFFSPGRINLIGEHIDYNGGFVFPCPITLGTFAAATLRDDRICRAYSLNFESLGVIEFSLDDLSYKKEDNWTNYLKGVLKVLIEKGYKIDKGIDLVINGNLPNGAGLSSSASLEMLIVKILDTFFSLNISKVDAALIGKEVENTYIGVNSGIMDQFAISLGEKDKAILLDCNSLYYEYVPLNLGDNSIIIMNTNKRRELADSKYNERRKECDDSLDTLKKYTNISSLCELTSLEFETYKDKIEDSNKLRRCVHAISENERVKDAVKALKENNLELFGQLMNQSHISLRDDYEVTGKELDTLAENAWKQPGVLGARMTGAGFGGCAIAIVNNNHVDEFIKNVGQAYKDAIGYEASFYVASIGNGPTEL</sequence>
<accession>Q0ST92</accession>
<comment type="function">
    <text evidence="1">Catalyzes the transfer of the gamma-phosphate of ATP to D-galactose to form alpha-D-galactose-1-phosphate (Gal-1-P).</text>
</comment>
<comment type="catalytic activity">
    <reaction evidence="1">
        <text>alpha-D-galactose + ATP = alpha-D-galactose 1-phosphate + ADP + H(+)</text>
        <dbReference type="Rhea" id="RHEA:13553"/>
        <dbReference type="ChEBI" id="CHEBI:15378"/>
        <dbReference type="ChEBI" id="CHEBI:28061"/>
        <dbReference type="ChEBI" id="CHEBI:30616"/>
        <dbReference type="ChEBI" id="CHEBI:58336"/>
        <dbReference type="ChEBI" id="CHEBI:456216"/>
        <dbReference type="EC" id="2.7.1.6"/>
    </reaction>
</comment>
<comment type="pathway">
    <text evidence="1">Carbohydrate metabolism; galactose metabolism.</text>
</comment>
<comment type="subcellular location">
    <subcellularLocation>
        <location evidence="1">Cytoplasm</location>
    </subcellularLocation>
</comment>
<comment type="similarity">
    <text evidence="1">Belongs to the GHMP kinase family. GalK subfamily.</text>
</comment>
<reference key="1">
    <citation type="journal article" date="2006" name="Genome Res.">
        <title>Skewed genomic variability in strains of the toxigenic bacterial pathogen, Clostridium perfringens.</title>
        <authorList>
            <person name="Myers G.S.A."/>
            <person name="Rasko D.A."/>
            <person name="Cheung J.K."/>
            <person name="Ravel J."/>
            <person name="Seshadri R."/>
            <person name="DeBoy R.T."/>
            <person name="Ren Q."/>
            <person name="Varga J."/>
            <person name="Awad M.M."/>
            <person name="Brinkac L.M."/>
            <person name="Daugherty S.C."/>
            <person name="Haft D.H."/>
            <person name="Dodson R.J."/>
            <person name="Madupu R."/>
            <person name="Nelson W.C."/>
            <person name="Rosovitz M.J."/>
            <person name="Sullivan S.A."/>
            <person name="Khouri H."/>
            <person name="Dimitrov G.I."/>
            <person name="Watkins K.L."/>
            <person name="Mulligan S."/>
            <person name="Benton J."/>
            <person name="Radune D."/>
            <person name="Fisher D.J."/>
            <person name="Atkins H.S."/>
            <person name="Hiscox T."/>
            <person name="Jost B.H."/>
            <person name="Billington S.J."/>
            <person name="Songer J.G."/>
            <person name="McClane B.A."/>
            <person name="Titball R.W."/>
            <person name="Rood J.I."/>
            <person name="Melville S.B."/>
            <person name="Paulsen I.T."/>
        </authorList>
    </citation>
    <scope>NUCLEOTIDE SEQUENCE [LARGE SCALE GENOMIC DNA]</scope>
    <source>
        <strain>SM101 / Type A</strain>
    </source>
</reference>
<name>GAL1_CLOPS</name>